<protein>
    <recommendedName>
        <fullName evidence="7">Exosome complex component RRP4 homolog</fullName>
    </recommendedName>
    <alternativeName>
        <fullName evidence="7">Ribosomal RNA-processing protein 4</fullName>
        <shortName evidence="6">AtRRP4</shortName>
        <shortName evidence="6">AtRrp4p</shortName>
    </alternativeName>
</protein>
<reference key="1">
    <citation type="journal article" date="2000" name="Nature">
        <title>Sequence and analysis of chromosome 1 of the plant Arabidopsis thaliana.</title>
        <authorList>
            <person name="Theologis A."/>
            <person name="Ecker J.R."/>
            <person name="Palm C.J."/>
            <person name="Federspiel N.A."/>
            <person name="Kaul S."/>
            <person name="White O."/>
            <person name="Alonso J."/>
            <person name="Altafi H."/>
            <person name="Araujo R."/>
            <person name="Bowman C.L."/>
            <person name="Brooks S.Y."/>
            <person name="Buehler E."/>
            <person name="Chan A."/>
            <person name="Chao Q."/>
            <person name="Chen H."/>
            <person name="Cheuk R.F."/>
            <person name="Chin C.W."/>
            <person name="Chung M.K."/>
            <person name="Conn L."/>
            <person name="Conway A.B."/>
            <person name="Conway A.R."/>
            <person name="Creasy T.H."/>
            <person name="Dewar K."/>
            <person name="Dunn P."/>
            <person name="Etgu P."/>
            <person name="Feldblyum T.V."/>
            <person name="Feng J.-D."/>
            <person name="Fong B."/>
            <person name="Fujii C.Y."/>
            <person name="Gill J.E."/>
            <person name="Goldsmith A.D."/>
            <person name="Haas B."/>
            <person name="Hansen N.F."/>
            <person name="Hughes B."/>
            <person name="Huizar L."/>
            <person name="Hunter J.L."/>
            <person name="Jenkins J."/>
            <person name="Johnson-Hopson C."/>
            <person name="Khan S."/>
            <person name="Khaykin E."/>
            <person name="Kim C.J."/>
            <person name="Koo H.L."/>
            <person name="Kremenetskaia I."/>
            <person name="Kurtz D.B."/>
            <person name="Kwan A."/>
            <person name="Lam B."/>
            <person name="Langin-Hooper S."/>
            <person name="Lee A."/>
            <person name="Lee J.M."/>
            <person name="Lenz C.A."/>
            <person name="Li J.H."/>
            <person name="Li Y.-P."/>
            <person name="Lin X."/>
            <person name="Liu S.X."/>
            <person name="Liu Z.A."/>
            <person name="Luros J.S."/>
            <person name="Maiti R."/>
            <person name="Marziali A."/>
            <person name="Militscher J."/>
            <person name="Miranda M."/>
            <person name="Nguyen M."/>
            <person name="Nierman W.C."/>
            <person name="Osborne B.I."/>
            <person name="Pai G."/>
            <person name="Peterson J."/>
            <person name="Pham P.K."/>
            <person name="Rizzo M."/>
            <person name="Rooney T."/>
            <person name="Rowley D."/>
            <person name="Sakano H."/>
            <person name="Salzberg S.L."/>
            <person name="Schwartz J.R."/>
            <person name="Shinn P."/>
            <person name="Southwick A.M."/>
            <person name="Sun H."/>
            <person name="Tallon L.J."/>
            <person name="Tambunga G."/>
            <person name="Toriumi M.J."/>
            <person name="Town C.D."/>
            <person name="Utterback T."/>
            <person name="Van Aken S."/>
            <person name="Vaysberg M."/>
            <person name="Vysotskaia V.S."/>
            <person name="Walker M."/>
            <person name="Wu D."/>
            <person name="Yu G."/>
            <person name="Fraser C.M."/>
            <person name="Venter J.C."/>
            <person name="Davis R.W."/>
        </authorList>
    </citation>
    <scope>NUCLEOTIDE SEQUENCE [LARGE SCALE GENOMIC DNA]</scope>
    <source>
        <strain>cv. Columbia</strain>
    </source>
</reference>
<reference key="2">
    <citation type="journal article" date="2017" name="Plant J.">
        <title>Araport11: a complete reannotation of the Arabidopsis thaliana reference genome.</title>
        <authorList>
            <person name="Cheng C.Y."/>
            <person name="Krishnakumar V."/>
            <person name="Chan A.P."/>
            <person name="Thibaud-Nissen F."/>
            <person name="Schobel S."/>
            <person name="Town C.D."/>
        </authorList>
    </citation>
    <scope>GENOME REANNOTATION</scope>
    <source>
        <strain>cv. Columbia</strain>
    </source>
</reference>
<reference key="3">
    <citation type="journal article" date="2003" name="Science">
        <title>Empirical analysis of transcriptional activity in the Arabidopsis genome.</title>
        <authorList>
            <person name="Yamada K."/>
            <person name="Lim J."/>
            <person name="Dale J.M."/>
            <person name="Chen H."/>
            <person name="Shinn P."/>
            <person name="Palm C.J."/>
            <person name="Southwick A.M."/>
            <person name="Wu H.C."/>
            <person name="Kim C.J."/>
            <person name="Nguyen M."/>
            <person name="Pham P.K."/>
            <person name="Cheuk R.F."/>
            <person name="Karlin-Newmann G."/>
            <person name="Liu S.X."/>
            <person name="Lam B."/>
            <person name="Sakano H."/>
            <person name="Wu T."/>
            <person name="Yu G."/>
            <person name="Miranda M."/>
            <person name="Quach H.L."/>
            <person name="Tripp M."/>
            <person name="Chang C.H."/>
            <person name="Lee J.M."/>
            <person name="Toriumi M.J."/>
            <person name="Chan M.M."/>
            <person name="Tang C.C."/>
            <person name="Onodera C.S."/>
            <person name="Deng J.M."/>
            <person name="Akiyama K."/>
            <person name="Ansari Y."/>
            <person name="Arakawa T."/>
            <person name="Banh J."/>
            <person name="Banno F."/>
            <person name="Bowser L."/>
            <person name="Brooks S.Y."/>
            <person name="Carninci P."/>
            <person name="Chao Q."/>
            <person name="Choy N."/>
            <person name="Enju A."/>
            <person name="Goldsmith A.D."/>
            <person name="Gurjal M."/>
            <person name="Hansen N.F."/>
            <person name="Hayashizaki Y."/>
            <person name="Johnson-Hopson C."/>
            <person name="Hsuan V.W."/>
            <person name="Iida K."/>
            <person name="Karnes M."/>
            <person name="Khan S."/>
            <person name="Koesema E."/>
            <person name="Ishida J."/>
            <person name="Jiang P.X."/>
            <person name="Jones T."/>
            <person name="Kawai J."/>
            <person name="Kamiya A."/>
            <person name="Meyers C."/>
            <person name="Nakajima M."/>
            <person name="Narusaka M."/>
            <person name="Seki M."/>
            <person name="Sakurai T."/>
            <person name="Satou M."/>
            <person name="Tamse R."/>
            <person name="Vaysberg M."/>
            <person name="Wallender E.K."/>
            <person name="Wong C."/>
            <person name="Yamamura Y."/>
            <person name="Yuan S."/>
            <person name="Shinozaki K."/>
            <person name="Davis R.W."/>
            <person name="Theologis A."/>
            <person name="Ecker J.R."/>
        </authorList>
    </citation>
    <scope>NUCLEOTIDE SEQUENCE [LARGE SCALE MRNA]</scope>
    <source>
        <strain>cv. Columbia</strain>
    </source>
</reference>
<reference key="4">
    <citation type="submission" date="2004-09" db="EMBL/GenBank/DDBJ databases">
        <title>Large-scale analysis of RIKEN Arabidopsis full-length (RAFL) cDNAs.</title>
        <authorList>
            <person name="Totoki Y."/>
            <person name="Seki M."/>
            <person name="Ishida J."/>
            <person name="Nakajima M."/>
            <person name="Enju A."/>
            <person name="Kamiya A."/>
            <person name="Narusaka M."/>
            <person name="Shin-i T."/>
            <person name="Nakagawa M."/>
            <person name="Sakamoto N."/>
            <person name="Oishi K."/>
            <person name="Kohara Y."/>
            <person name="Kobayashi M."/>
            <person name="Toyoda A."/>
            <person name="Sakaki Y."/>
            <person name="Sakurai T."/>
            <person name="Iida K."/>
            <person name="Akiyama K."/>
            <person name="Satou M."/>
            <person name="Toyoda T."/>
            <person name="Konagaya A."/>
            <person name="Carninci P."/>
            <person name="Kawai J."/>
            <person name="Hayashizaki Y."/>
            <person name="Shinozaki K."/>
        </authorList>
    </citation>
    <scope>NUCLEOTIDE SEQUENCE [LARGE SCALE MRNA]</scope>
    <source>
        <strain>cv. Columbia</strain>
    </source>
</reference>
<reference key="5">
    <citation type="journal article" date="2002" name="Nucleic Acids Res.">
        <title>Arabidopsis thaliana exosome subunit AtRrp4p is a hydrolytic 3'--&gt;5' exonuclease containing S1 and KH RNA-binding domains.</title>
        <authorList>
            <person name="Chekanova J.A."/>
            <person name="Dutko J.A."/>
            <person name="Mian I.S."/>
            <person name="Belostotsky D.A."/>
        </authorList>
    </citation>
    <scope>FUNCTION</scope>
    <scope>SUBUNIT</scope>
    <scope>INTERACTION WITH RPP41</scope>
    <scope>TISSUE SPECIFICITY</scope>
    <scope>DOMAIN</scope>
</reference>
<reference key="6">
    <citation type="journal article" date="2007" name="Cell">
        <title>Genome-wide high-resolution mapping of exosome substrates reveals hidden features in the Arabidopsis transcriptome.</title>
        <authorList>
            <person name="Chekanova J.A."/>
            <person name="Gregory B.D."/>
            <person name="Reverdatto S.V."/>
            <person name="Chen H."/>
            <person name="Kumar R."/>
            <person name="Hooker T."/>
            <person name="Yazaki J."/>
            <person name="Li P."/>
            <person name="Skiba N."/>
            <person name="Peng Q."/>
            <person name="Alonso J."/>
            <person name="Brukhin V."/>
            <person name="Grossniklaus U."/>
            <person name="Ecker J.R."/>
            <person name="Belostotsky D.A."/>
        </authorList>
    </citation>
    <scope>SUBUNIT</scope>
    <scope>DISRUPTION PHENOTYPE</scope>
</reference>
<keyword id="KW-0963">Cytoplasm</keyword>
<keyword id="KW-0271">Exosome</keyword>
<keyword id="KW-0539">Nucleus</keyword>
<keyword id="KW-1185">Reference proteome</keyword>
<keyword id="KW-0694">RNA-binding</keyword>
<keyword id="KW-0698">rRNA processing</keyword>
<evidence type="ECO:0000250" key="1">
    <source>
        <dbReference type="UniProtKB" id="Q13868"/>
    </source>
</evidence>
<evidence type="ECO:0000255" key="2"/>
<evidence type="ECO:0000255" key="3">
    <source>
        <dbReference type="PROSITE-ProRule" id="PRU00180"/>
    </source>
</evidence>
<evidence type="ECO:0000269" key="4">
    <source>
    </source>
</evidence>
<evidence type="ECO:0000269" key="5">
    <source>
    </source>
</evidence>
<evidence type="ECO:0000303" key="6">
    <source>
    </source>
</evidence>
<evidence type="ECO:0000305" key="7"/>
<evidence type="ECO:0000312" key="8">
    <source>
        <dbReference type="Araport" id="AT1G03360"/>
    </source>
</evidence>
<evidence type="ECO:0000312" key="9">
    <source>
        <dbReference type="EMBL" id="AAC72108.1"/>
    </source>
</evidence>
<comment type="function">
    <text evidence="4 5">Non-catalytic component of the RNA exosome complex which has 3'-&gt;5' exoribonuclease activity and participates in a multitude of cellular RNA processing, maturation and degradation events. In vitro, is an active and distributive 3'-&gt;5' exonuclease requiring a free 3'-OH on the substrate and releasing nucleoside 5'-monophosphates (PubMed:11809881). Required for normal embryo development (PubMed:18160042).</text>
</comment>
<comment type="subunit">
    <text evidence="4 5">Component of the RNA exosome complex (PubMed:11809881, PubMed:18160042). Interacts with RPP41 (PubMed:11809881).</text>
</comment>
<comment type="subcellular location">
    <subcellularLocation>
        <location evidence="1">Cytoplasm</location>
    </subcellularLocation>
    <subcellularLocation>
        <location evidence="1">Nucleus</location>
        <location evidence="1">Nucleolus</location>
    </subcellularLocation>
    <subcellularLocation>
        <location evidence="1">Nucleus</location>
    </subcellularLocation>
</comment>
<comment type="tissue specificity">
    <text evidence="4">Expressed in roots, stems, rosette and cauline leaves, flowers and siliques.</text>
</comment>
<comment type="domain">
    <text>The two RNA-binding domains (S1 motif and KH domain) are separated by a conserved linker of five amino acids (KYGKL) and can bind RNA independently. Both domains are also needed for RNA degradation and interaction with RRP41, another exosome subunit.</text>
</comment>
<comment type="disruption phenotype">
    <text evidence="5">Embryonic lethality due to embryo developmental arrest at early globular stage.</text>
</comment>
<comment type="similarity">
    <text evidence="7">Belongs to the RRP4 family.</text>
</comment>
<dbReference type="EMBL" id="AC005278">
    <property type="protein sequence ID" value="AAC72108.1"/>
    <property type="molecule type" value="Genomic_DNA"/>
</dbReference>
<dbReference type="EMBL" id="CP002684">
    <property type="protein sequence ID" value="AEE27563.1"/>
    <property type="molecule type" value="Genomic_DNA"/>
</dbReference>
<dbReference type="EMBL" id="BT010533">
    <property type="protein sequence ID" value="AAQ65156.1"/>
    <property type="molecule type" value="mRNA"/>
</dbReference>
<dbReference type="EMBL" id="AK176232">
    <property type="protein sequence ID" value="BAD43995.1"/>
    <property type="molecule type" value="mRNA"/>
</dbReference>
<dbReference type="PIR" id="C86165">
    <property type="entry name" value="C86165"/>
</dbReference>
<dbReference type="RefSeq" id="NP_171835.1">
    <property type="nucleotide sequence ID" value="NM_100218.5"/>
</dbReference>
<dbReference type="SMR" id="Q9ZVT7"/>
<dbReference type="FunCoup" id="Q9ZVT7">
    <property type="interactions" value="4241"/>
</dbReference>
<dbReference type="IntAct" id="Q9ZVT7">
    <property type="interactions" value="8"/>
</dbReference>
<dbReference type="STRING" id="3702.Q9ZVT7"/>
<dbReference type="PaxDb" id="3702-AT1G03360.1"/>
<dbReference type="ProteomicsDB" id="226848"/>
<dbReference type="EnsemblPlants" id="AT1G03360.1">
    <property type="protein sequence ID" value="AT1G03360.1"/>
    <property type="gene ID" value="AT1G03360"/>
</dbReference>
<dbReference type="GeneID" id="839521"/>
<dbReference type="Gramene" id="AT1G03360.1">
    <property type="protein sequence ID" value="AT1G03360.1"/>
    <property type="gene ID" value="AT1G03360"/>
</dbReference>
<dbReference type="KEGG" id="ath:AT1G03360"/>
<dbReference type="Araport" id="AT1G03360"/>
<dbReference type="TAIR" id="AT1G03360">
    <property type="gene designation" value="RRP4"/>
</dbReference>
<dbReference type="eggNOG" id="KOG3013">
    <property type="taxonomic scope" value="Eukaryota"/>
</dbReference>
<dbReference type="HOGENOM" id="CLU_034114_3_0_1"/>
<dbReference type="InParanoid" id="Q9ZVT7"/>
<dbReference type="OMA" id="MNMPDGV"/>
<dbReference type="PhylomeDB" id="Q9ZVT7"/>
<dbReference type="CD-CODE" id="4299E36E">
    <property type="entry name" value="Nucleolus"/>
</dbReference>
<dbReference type="PRO" id="PR:Q9ZVT7"/>
<dbReference type="Proteomes" id="UP000006548">
    <property type="component" value="Chromosome 1"/>
</dbReference>
<dbReference type="ExpressionAtlas" id="Q9ZVT7">
    <property type="expression patterns" value="baseline and differential"/>
</dbReference>
<dbReference type="GO" id="GO:0005737">
    <property type="term" value="C:cytoplasm"/>
    <property type="evidence" value="ECO:0000314"/>
    <property type="project" value="TAIR"/>
</dbReference>
<dbReference type="GO" id="GO:0000178">
    <property type="term" value="C:exosome (RNase complex)"/>
    <property type="evidence" value="ECO:0007669"/>
    <property type="project" value="UniProtKB-KW"/>
</dbReference>
<dbReference type="GO" id="GO:0005730">
    <property type="term" value="C:nucleolus"/>
    <property type="evidence" value="ECO:0000314"/>
    <property type="project" value="TAIR"/>
</dbReference>
<dbReference type="GO" id="GO:0005654">
    <property type="term" value="C:nucleoplasm"/>
    <property type="evidence" value="ECO:0000314"/>
    <property type="project" value="TAIR"/>
</dbReference>
<dbReference type="GO" id="GO:0003723">
    <property type="term" value="F:RNA binding"/>
    <property type="evidence" value="ECO:0007669"/>
    <property type="project" value="UniProtKB-KW"/>
</dbReference>
<dbReference type="GO" id="GO:0000460">
    <property type="term" value="P:maturation of 5.8S rRNA"/>
    <property type="evidence" value="ECO:0000315"/>
    <property type="project" value="TAIR"/>
</dbReference>
<dbReference type="GO" id="GO:0060149">
    <property type="term" value="P:negative regulation of post-transcriptional gene silencing"/>
    <property type="evidence" value="ECO:0000315"/>
    <property type="project" value="TAIR"/>
</dbReference>
<dbReference type="CDD" id="cd22525">
    <property type="entry name" value="KH-I_Rrp4_eukar"/>
    <property type="match status" value="1"/>
</dbReference>
<dbReference type="CDD" id="cd05789">
    <property type="entry name" value="S1_Rrp4"/>
    <property type="match status" value="1"/>
</dbReference>
<dbReference type="FunFam" id="2.40.50.140:FF:000038">
    <property type="entry name" value="Exosome complex component RRP4"/>
    <property type="match status" value="1"/>
</dbReference>
<dbReference type="Gene3D" id="2.40.50.100">
    <property type="match status" value="1"/>
</dbReference>
<dbReference type="Gene3D" id="2.40.50.140">
    <property type="entry name" value="Nucleic acid-binding proteins"/>
    <property type="match status" value="1"/>
</dbReference>
<dbReference type="InterPro" id="IPR026699">
    <property type="entry name" value="Exosome_RNA_bind1/RRP40/RRP4"/>
</dbReference>
<dbReference type="InterPro" id="IPR004088">
    <property type="entry name" value="KH_dom_type_1"/>
</dbReference>
<dbReference type="InterPro" id="IPR036612">
    <property type="entry name" value="KH_dom_type_1_sf"/>
</dbReference>
<dbReference type="InterPro" id="IPR012340">
    <property type="entry name" value="NA-bd_OB-fold"/>
</dbReference>
<dbReference type="InterPro" id="IPR048565">
    <property type="entry name" value="RRP4_S1"/>
</dbReference>
<dbReference type="InterPro" id="IPR003029">
    <property type="entry name" value="S1_domain"/>
</dbReference>
<dbReference type="PANTHER" id="PTHR21321:SF4">
    <property type="entry name" value="EXOSOME COMPLEX COMPONENT RRP4"/>
    <property type="match status" value="1"/>
</dbReference>
<dbReference type="PANTHER" id="PTHR21321">
    <property type="entry name" value="PNAS-3 RELATED"/>
    <property type="match status" value="1"/>
</dbReference>
<dbReference type="Pfam" id="PF15985">
    <property type="entry name" value="KH_6"/>
    <property type="match status" value="1"/>
</dbReference>
<dbReference type="Pfam" id="PF21266">
    <property type="entry name" value="RRP4_S1"/>
    <property type="match status" value="1"/>
</dbReference>
<dbReference type="SMART" id="SM00316">
    <property type="entry name" value="S1"/>
    <property type="match status" value="1"/>
</dbReference>
<dbReference type="SUPFAM" id="SSF54791">
    <property type="entry name" value="Eukaryotic type KH-domain (KH-domain type I)"/>
    <property type="match status" value="1"/>
</dbReference>
<dbReference type="SUPFAM" id="SSF50249">
    <property type="entry name" value="Nucleic acid-binding proteins"/>
    <property type="match status" value="1"/>
</dbReference>
<dbReference type="SUPFAM" id="SSF110324">
    <property type="entry name" value="Ribosomal L27 protein-like"/>
    <property type="match status" value="1"/>
</dbReference>
<accession>Q9ZVT7</accession>
<organism>
    <name type="scientific">Arabidopsis thaliana</name>
    <name type="common">Mouse-ear cress</name>
    <dbReference type="NCBI Taxonomy" id="3702"/>
    <lineage>
        <taxon>Eukaryota</taxon>
        <taxon>Viridiplantae</taxon>
        <taxon>Streptophyta</taxon>
        <taxon>Embryophyta</taxon>
        <taxon>Tracheophyta</taxon>
        <taxon>Spermatophyta</taxon>
        <taxon>Magnoliopsida</taxon>
        <taxon>eudicotyledons</taxon>
        <taxon>Gunneridae</taxon>
        <taxon>Pentapetalae</taxon>
        <taxon>rosids</taxon>
        <taxon>malvids</taxon>
        <taxon>Brassicales</taxon>
        <taxon>Brassicaceae</taxon>
        <taxon>Camelineae</taxon>
        <taxon>Arabidopsis</taxon>
    </lineage>
</organism>
<gene>
    <name evidence="7" type="primary">RRP4</name>
    <name evidence="8" type="ordered locus">At1g03360</name>
    <name evidence="9" type="ORF">F15K9.4</name>
</gene>
<name>RRP4_ARATH</name>
<feature type="chain" id="PRO_0000435317" description="Exosome complex component RRP4 homolog">
    <location>
        <begin position="1"/>
        <end position="322"/>
    </location>
</feature>
<feature type="domain" description="S1 motif" evidence="3">
    <location>
        <begin position="94"/>
        <end position="172"/>
    </location>
</feature>
<feature type="domain" description="KH" evidence="2">
    <location>
        <begin position="182"/>
        <end position="237"/>
    </location>
</feature>
<proteinExistence type="evidence at protein level"/>
<sequence>MVMRKLQLPLSQTQKVRFERAIERLQSLSSSANSDASVIVTDSIPVNHDDAFLKGHGTSEVDGELLATVCGVVERVDKLVYVRTLRARYKPEVGDIVVGRVIEVAQKRWRVELNFNQDGVLMLSSMNMPDGIQRRRTSVDELNMRNIFVEHDVVCAEVRNFQHDGSLQLQARSQKYGKLEKGQLLKVDPYLVKRSKHHFHYVESLGIDLIIGCNGFIWVGEHVEVRDPMAIDDQKDEEMISSSSTGKEQSHIPLETRQTICRIGNAIRVLSNLGFTVTLEVIMETVNLSNSKNIDIHDMLGSEFHVVVAENEAERRRTKRKK</sequence>